<proteinExistence type="inferred from homology"/>
<accession>Q7VAP9</accession>
<sequence>MDFSISTIALFTLLVSYLLGSLPSGYLAGKWILGIDLREIGSGSTGATNVLRHVGKTPALFVFFIDVTKGIGAILIAKSFLLDESLQIAAGLASLSGHIWPVWLKGKGGKAVATGLGVFLGISWQVGLGSLGIFLLILSIWRIVSLASISAAISLPVLMLINSKETFSIPYIVISFIAMILVLWRHRSNLIRLIKGQEPRIGKSN</sequence>
<reference key="1">
    <citation type="journal article" date="2003" name="Proc. Natl. Acad. Sci. U.S.A.">
        <title>Genome sequence of the cyanobacterium Prochlorococcus marinus SS120, a nearly minimal oxyphototrophic genome.</title>
        <authorList>
            <person name="Dufresne A."/>
            <person name="Salanoubat M."/>
            <person name="Partensky F."/>
            <person name="Artiguenave F."/>
            <person name="Axmann I.M."/>
            <person name="Barbe V."/>
            <person name="Duprat S."/>
            <person name="Galperin M.Y."/>
            <person name="Koonin E.V."/>
            <person name="Le Gall F."/>
            <person name="Makarova K.S."/>
            <person name="Ostrowski M."/>
            <person name="Oztas S."/>
            <person name="Robert C."/>
            <person name="Rogozin I.B."/>
            <person name="Scanlan D.J."/>
            <person name="Tandeau de Marsac N."/>
            <person name="Weissenbach J."/>
            <person name="Wincker P."/>
            <person name="Wolf Y.I."/>
            <person name="Hess W.R."/>
        </authorList>
    </citation>
    <scope>NUCLEOTIDE SEQUENCE [LARGE SCALE GENOMIC DNA]</scope>
    <source>
        <strain>SARG / CCMP1375 / SS120</strain>
    </source>
</reference>
<evidence type="ECO:0000255" key="1">
    <source>
        <dbReference type="HAMAP-Rule" id="MF_01043"/>
    </source>
</evidence>
<protein>
    <recommendedName>
        <fullName evidence="1">Glycerol-3-phosphate acyltransferase</fullName>
    </recommendedName>
    <alternativeName>
        <fullName evidence="1">Acyl-PO4 G3P acyltransferase</fullName>
    </alternativeName>
    <alternativeName>
        <fullName evidence="1">Acyl-phosphate--glycerol-3-phosphate acyltransferase</fullName>
    </alternativeName>
    <alternativeName>
        <fullName evidence="1">G3P acyltransferase</fullName>
        <shortName evidence="1">GPAT</shortName>
        <ecNumber evidence="1">2.3.1.275</ecNumber>
    </alternativeName>
    <alternativeName>
        <fullName evidence="1">Lysophosphatidic acid synthase</fullName>
        <shortName evidence="1">LPA synthase</shortName>
    </alternativeName>
</protein>
<keyword id="KW-0997">Cell inner membrane</keyword>
<keyword id="KW-1003">Cell membrane</keyword>
<keyword id="KW-0444">Lipid biosynthesis</keyword>
<keyword id="KW-0443">Lipid metabolism</keyword>
<keyword id="KW-0472">Membrane</keyword>
<keyword id="KW-0594">Phospholipid biosynthesis</keyword>
<keyword id="KW-1208">Phospholipid metabolism</keyword>
<keyword id="KW-1185">Reference proteome</keyword>
<keyword id="KW-0808">Transferase</keyword>
<keyword id="KW-0812">Transmembrane</keyword>
<keyword id="KW-1133">Transmembrane helix</keyword>
<dbReference type="EC" id="2.3.1.275" evidence="1"/>
<dbReference type="EMBL" id="AE017126">
    <property type="protein sequence ID" value="AAQ00452.1"/>
    <property type="molecule type" value="Genomic_DNA"/>
</dbReference>
<dbReference type="RefSeq" id="NP_875799.1">
    <property type="nucleotide sequence ID" value="NC_005042.1"/>
</dbReference>
<dbReference type="RefSeq" id="WP_011125559.1">
    <property type="nucleotide sequence ID" value="NC_005042.1"/>
</dbReference>
<dbReference type="SMR" id="Q7VAP9"/>
<dbReference type="STRING" id="167539.Pro_1408"/>
<dbReference type="EnsemblBacteria" id="AAQ00452">
    <property type="protein sequence ID" value="AAQ00452"/>
    <property type="gene ID" value="Pro_1408"/>
</dbReference>
<dbReference type="KEGG" id="pma:Pro_1408"/>
<dbReference type="PATRIC" id="fig|167539.5.peg.1474"/>
<dbReference type="eggNOG" id="COG0344">
    <property type="taxonomic scope" value="Bacteria"/>
</dbReference>
<dbReference type="HOGENOM" id="CLU_081254_7_1_3"/>
<dbReference type="OrthoDB" id="9777124at2"/>
<dbReference type="UniPathway" id="UPA00085"/>
<dbReference type="Proteomes" id="UP000001420">
    <property type="component" value="Chromosome"/>
</dbReference>
<dbReference type="GO" id="GO:0005886">
    <property type="term" value="C:plasma membrane"/>
    <property type="evidence" value="ECO:0007669"/>
    <property type="project" value="UniProtKB-SubCell"/>
</dbReference>
<dbReference type="GO" id="GO:0043772">
    <property type="term" value="F:acyl-phosphate glycerol-3-phosphate acyltransferase activity"/>
    <property type="evidence" value="ECO:0007669"/>
    <property type="project" value="UniProtKB-UniRule"/>
</dbReference>
<dbReference type="GO" id="GO:0008654">
    <property type="term" value="P:phospholipid biosynthetic process"/>
    <property type="evidence" value="ECO:0007669"/>
    <property type="project" value="UniProtKB-UniRule"/>
</dbReference>
<dbReference type="HAMAP" id="MF_01043">
    <property type="entry name" value="PlsY"/>
    <property type="match status" value="1"/>
</dbReference>
<dbReference type="InterPro" id="IPR003811">
    <property type="entry name" value="G3P_acylTferase_PlsY"/>
</dbReference>
<dbReference type="NCBIfam" id="TIGR00023">
    <property type="entry name" value="glycerol-3-phosphate 1-O-acyltransferase PlsY"/>
    <property type="match status" value="1"/>
</dbReference>
<dbReference type="PANTHER" id="PTHR30309:SF0">
    <property type="entry name" value="GLYCEROL-3-PHOSPHATE ACYLTRANSFERASE-RELATED"/>
    <property type="match status" value="1"/>
</dbReference>
<dbReference type="PANTHER" id="PTHR30309">
    <property type="entry name" value="INNER MEMBRANE PROTEIN YGIH"/>
    <property type="match status" value="1"/>
</dbReference>
<dbReference type="Pfam" id="PF02660">
    <property type="entry name" value="G3P_acyltransf"/>
    <property type="match status" value="1"/>
</dbReference>
<dbReference type="SMART" id="SM01207">
    <property type="entry name" value="G3P_acyltransf"/>
    <property type="match status" value="1"/>
</dbReference>
<feature type="chain" id="PRO_0000188423" description="Glycerol-3-phosphate acyltransferase">
    <location>
        <begin position="1"/>
        <end position="205"/>
    </location>
</feature>
<feature type="transmembrane region" description="Helical" evidence="1">
    <location>
        <begin position="8"/>
        <end position="28"/>
    </location>
</feature>
<feature type="transmembrane region" description="Helical" evidence="1">
    <location>
        <begin position="57"/>
        <end position="77"/>
    </location>
</feature>
<feature type="transmembrane region" description="Helical" evidence="1">
    <location>
        <begin position="84"/>
        <end position="104"/>
    </location>
</feature>
<feature type="transmembrane region" description="Helical" evidence="1">
    <location>
        <begin position="118"/>
        <end position="138"/>
    </location>
</feature>
<feature type="transmembrane region" description="Helical" evidence="1">
    <location>
        <begin position="143"/>
        <end position="163"/>
    </location>
</feature>
<feature type="transmembrane region" description="Helical" evidence="1">
    <location>
        <begin position="164"/>
        <end position="184"/>
    </location>
</feature>
<comment type="function">
    <text evidence="1">Catalyzes the transfer of an acyl group from acyl-phosphate (acyl-PO(4)) to glycerol-3-phosphate (G3P) to form lysophosphatidic acid (LPA). This enzyme utilizes acyl-phosphate as fatty acyl donor, but not acyl-CoA or acyl-ACP.</text>
</comment>
<comment type="catalytic activity">
    <reaction evidence="1">
        <text>an acyl phosphate + sn-glycerol 3-phosphate = a 1-acyl-sn-glycero-3-phosphate + phosphate</text>
        <dbReference type="Rhea" id="RHEA:34075"/>
        <dbReference type="ChEBI" id="CHEBI:43474"/>
        <dbReference type="ChEBI" id="CHEBI:57597"/>
        <dbReference type="ChEBI" id="CHEBI:57970"/>
        <dbReference type="ChEBI" id="CHEBI:59918"/>
        <dbReference type="EC" id="2.3.1.275"/>
    </reaction>
</comment>
<comment type="pathway">
    <text evidence="1">Lipid metabolism; phospholipid metabolism.</text>
</comment>
<comment type="subunit">
    <text evidence="1">Probably interacts with PlsX.</text>
</comment>
<comment type="subcellular location">
    <subcellularLocation>
        <location evidence="1">Cell inner membrane</location>
        <topology evidence="1">Multi-pass membrane protein</topology>
    </subcellularLocation>
</comment>
<comment type="similarity">
    <text evidence="1">Belongs to the PlsY family.</text>
</comment>
<name>PLSY_PROMA</name>
<gene>
    <name evidence="1" type="primary">plsY</name>
    <name type="ordered locus">Pro_1408</name>
</gene>
<organism>
    <name type="scientific">Prochlorococcus marinus (strain SARG / CCMP1375 / SS120)</name>
    <dbReference type="NCBI Taxonomy" id="167539"/>
    <lineage>
        <taxon>Bacteria</taxon>
        <taxon>Bacillati</taxon>
        <taxon>Cyanobacteriota</taxon>
        <taxon>Cyanophyceae</taxon>
        <taxon>Synechococcales</taxon>
        <taxon>Prochlorococcaceae</taxon>
        <taxon>Prochlorococcus</taxon>
    </lineage>
</organism>